<sequence>MSLDNCKKVAAYKAVDDFVKDGCKIGIGSGSTIKYAVDRIKELGLKNVICVPTSFQSTQLIVEAGLELSDLSRTPELDITIDGADEVDKDFNLIKGGGGCQLQEKIVAYSSKKLVIVADHTKESTELGENWKKGIPIEVVPMAYVPVMKKLESSSFSLTPKLRMAVNKAGPVVTDNGNFIIDAQFSKPLSNIPQLAIDIKMIPGVVETGLFVNMTKIAYFGQTDGTCKVKSI</sequence>
<name>RPIA_DICDI</name>
<feature type="chain" id="PRO_0000327472" description="Ribose-5-phosphate isomerase">
    <location>
        <begin position="1"/>
        <end position="232"/>
    </location>
</feature>
<proteinExistence type="inferred from homology"/>
<dbReference type="EC" id="5.3.1.6"/>
<dbReference type="EMBL" id="AAFI02000018">
    <property type="protein sequence ID" value="EAL69113.1"/>
    <property type="molecule type" value="Genomic_DNA"/>
</dbReference>
<dbReference type="RefSeq" id="XP_643016.1">
    <property type="nucleotide sequence ID" value="XM_637924.1"/>
</dbReference>
<dbReference type="SMR" id="Q551C2"/>
<dbReference type="FunCoup" id="Q551C2">
    <property type="interactions" value="352"/>
</dbReference>
<dbReference type="STRING" id="44689.Q551C2"/>
<dbReference type="PaxDb" id="44689-DDB0231225"/>
<dbReference type="EnsemblProtists" id="EAL69113">
    <property type="protein sequence ID" value="EAL69113"/>
    <property type="gene ID" value="DDB_G0276711"/>
</dbReference>
<dbReference type="GeneID" id="8620620"/>
<dbReference type="KEGG" id="ddi:DDB_G0276711"/>
<dbReference type="dictyBase" id="DDB_G0276711">
    <property type="gene designation" value="rpiA"/>
</dbReference>
<dbReference type="VEuPathDB" id="AmoebaDB:DDB_G0276711"/>
<dbReference type="eggNOG" id="KOG3075">
    <property type="taxonomic scope" value="Eukaryota"/>
</dbReference>
<dbReference type="HOGENOM" id="CLU_056590_0_2_1"/>
<dbReference type="InParanoid" id="Q551C2"/>
<dbReference type="OMA" id="LGIPMYN"/>
<dbReference type="PhylomeDB" id="Q551C2"/>
<dbReference type="Reactome" id="R-DDI-71336">
    <property type="pathway name" value="Pentose phosphate pathway"/>
</dbReference>
<dbReference type="UniPathway" id="UPA00115">
    <property type="reaction ID" value="UER00412"/>
</dbReference>
<dbReference type="PRO" id="PR:Q551C2"/>
<dbReference type="Proteomes" id="UP000002195">
    <property type="component" value="Chromosome 2"/>
</dbReference>
<dbReference type="GO" id="GO:0005737">
    <property type="term" value="C:cytoplasm"/>
    <property type="evidence" value="ECO:0000318"/>
    <property type="project" value="GO_Central"/>
</dbReference>
<dbReference type="GO" id="GO:0004751">
    <property type="term" value="F:ribose-5-phosphate isomerase activity"/>
    <property type="evidence" value="ECO:0000318"/>
    <property type="project" value="GO_Central"/>
</dbReference>
<dbReference type="GO" id="GO:0006014">
    <property type="term" value="P:D-ribose metabolic process"/>
    <property type="evidence" value="ECO:0000318"/>
    <property type="project" value="GO_Central"/>
</dbReference>
<dbReference type="GO" id="GO:0009052">
    <property type="term" value="P:pentose-phosphate shunt, non-oxidative branch"/>
    <property type="evidence" value="ECO:0000318"/>
    <property type="project" value="GO_Central"/>
</dbReference>
<dbReference type="CDD" id="cd01398">
    <property type="entry name" value="RPI_A"/>
    <property type="match status" value="1"/>
</dbReference>
<dbReference type="FunFam" id="3.30.70.260:FF:000018">
    <property type="entry name" value="Ribose-5-phosphate isomerase A"/>
    <property type="match status" value="1"/>
</dbReference>
<dbReference type="FunFam" id="3.40.50.1360:FF:000001">
    <property type="entry name" value="Ribose-5-phosphate isomerase A"/>
    <property type="match status" value="1"/>
</dbReference>
<dbReference type="Gene3D" id="3.30.70.260">
    <property type="match status" value="1"/>
</dbReference>
<dbReference type="Gene3D" id="3.40.50.1360">
    <property type="match status" value="1"/>
</dbReference>
<dbReference type="HAMAP" id="MF_00170">
    <property type="entry name" value="Rib_5P_isom_A"/>
    <property type="match status" value="1"/>
</dbReference>
<dbReference type="InterPro" id="IPR037171">
    <property type="entry name" value="NagB/RpiA_transferase-like"/>
</dbReference>
<dbReference type="InterPro" id="IPR020672">
    <property type="entry name" value="Ribose5P_isomerase_typA_subgr"/>
</dbReference>
<dbReference type="InterPro" id="IPR004788">
    <property type="entry name" value="Ribose5P_isomerase_type_A"/>
</dbReference>
<dbReference type="NCBIfam" id="NF001924">
    <property type="entry name" value="PRK00702.1"/>
    <property type="match status" value="1"/>
</dbReference>
<dbReference type="NCBIfam" id="TIGR00021">
    <property type="entry name" value="rpiA"/>
    <property type="match status" value="1"/>
</dbReference>
<dbReference type="PANTHER" id="PTHR11934">
    <property type="entry name" value="RIBOSE-5-PHOSPHATE ISOMERASE"/>
    <property type="match status" value="1"/>
</dbReference>
<dbReference type="PANTHER" id="PTHR11934:SF0">
    <property type="entry name" value="RIBOSE-5-PHOSPHATE ISOMERASE"/>
    <property type="match status" value="1"/>
</dbReference>
<dbReference type="Pfam" id="PF06026">
    <property type="entry name" value="Rib_5-P_isom_A"/>
    <property type="match status" value="1"/>
</dbReference>
<dbReference type="SUPFAM" id="SSF75445">
    <property type="entry name" value="D-ribose-5-phosphate isomerase (RpiA), lid domain"/>
    <property type="match status" value="1"/>
</dbReference>
<dbReference type="SUPFAM" id="SSF100950">
    <property type="entry name" value="NagB/RpiA/CoA transferase-like"/>
    <property type="match status" value="1"/>
</dbReference>
<gene>
    <name type="primary">rpiA</name>
    <name type="ORF">DDB_G0276711</name>
</gene>
<evidence type="ECO:0000305" key="1"/>
<keyword id="KW-0413">Isomerase</keyword>
<keyword id="KW-1185">Reference proteome</keyword>
<organism>
    <name type="scientific">Dictyostelium discoideum</name>
    <name type="common">Social amoeba</name>
    <dbReference type="NCBI Taxonomy" id="44689"/>
    <lineage>
        <taxon>Eukaryota</taxon>
        <taxon>Amoebozoa</taxon>
        <taxon>Evosea</taxon>
        <taxon>Eumycetozoa</taxon>
        <taxon>Dictyostelia</taxon>
        <taxon>Dictyosteliales</taxon>
        <taxon>Dictyosteliaceae</taxon>
        <taxon>Dictyostelium</taxon>
    </lineage>
</organism>
<protein>
    <recommendedName>
        <fullName>Ribose-5-phosphate isomerase</fullName>
        <ecNumber>5.3.1.6</ecNumber>
    </recommendedName>
    <alternativeName>
        <fullName>Phosphoriboisomerase</fullName>
    </alternativeName>
</protein>
<reference key="1">
    <citation type="journal article" date="2002" name="Nature">
        <title>Sequence and analysis of chromosome 2 of Dictyostelium discoideum.</title>
        <authorList>
            <person name="Gloeckner G."/>
            <person name="Eichinger L."/>
            <person name="Szafranski K."/>
            <person name="Pachebat J.A."/>
            <person name="Bankier A.T."/>
            <person name="Dear P.H."/>
            <person name="Lehmann R."/>
            <person name="Baumgart C."/>
            <person name="Parra G."/>
            <person name="Abril J.F."/>
            <person name="Guigo R."/>
            <person name="Kumpf K."/>
            <person name="Tunggal B."/>
            <person name="Cox E.C."/>
            <person name="Quail M.A."/>
            <person name="Platzer M."/>
            <person name="Rosenthal A."/>
            <person name="Noegel A.A."/>
        </authorList>
    </citation>
    <scope>NUCLEOTIDE SEQUENCE [LARGE SCALE GENOMIC DNA]</scope>
    <source>
        <strain>AX4</strain>
    </source>
</reference>
<reference key="2">
    <citation type="journal article" date="2005" name="Nature">
        <title>The genome of the social amoeba Dictyostelium discoideum.</title>
        <authorList>
            <person name="Eichinger L."/>
            <person name="Pachebat J.A."/>
            <person name="Gloeckner G."/>
            <person name="Rajandream M.A."/>
            <person name="Sucgang R."/>
            <person name="Berriman M."/>
            <person name="Song J."/>
            <person name="Olsen R."/>
            <person name="Szafranski K."/>
            <person name="Xu Q."/>
            <person name="Tunggal B."/>
            <person name="Kummerfeld S."/>
            <person name="Madera M."/>
            <person name="Konfortov B.A."/>
            <person name="Rivero F."/>
            <person name="Bankier A.T."/>
            <person name="Lehmann R."/>
            <person name="Hamlin N."/>
            <person name="Davies R."/>
            <person name="Gaudet P."/>
            <person name="Fey P."/>
            <person name="Pilcher K."/>
            <person name="Chen G."/>
            <person name="Saunders D."/>
            <person name="Sodergren E.J."/>
            <person name="Davis P."/>
            <person name="Kerhornou A."/>
            <person name="Nie X."/>
            <person name="Hall N."/>
            <person name="Anjard C."/>
            <person name="Hemphill L."/>
            <person name="Bason N."/>
            <person name="Farbrother P."/>
            <person name="Desany B."/>
            <person name="Just E."/>
            <person name="Morio T."/>
            <person name="Rost R."/>
            <person name="Churcher C.M."/>
            <person name="Cooper J."/>
            <person name="Haydock S."/>
            <person name="van Driessche N."/>
            <person name="Cronin A."/>
            <person name="Goodhead I."/>
            <person name="Muzny D.M."/>
            <person name="Mourier T."/>
            <person name="Pain A."/>
            <person name="Lu M."/>
            <person name="Harper D."/>
            <person name="Lindsay R."/>
            <person name="Hauser H."/>
            <person name="James K.D."/>
            <person name="Quiles M."/>
            <person name="Madan Babu M."/>
            <person name="Saito T."/>
            <person name="Buchrieser C."/>
            <person name="Wardroper A."/>
            <person name="Felder M."/>
            <person name="Thangavelu M."/>
            <person name="Johnson D."/>
            <person name="Knights A."/>
            <person name="Loulseged H."/>
            <person name="Mungall K.L."/>
            <person name="Oliver K."/>
            <person name="Price C."/>
            <person name="Quail M.A."/>
            <person name="Urushihara H."/>
            <person name="Hernandez J."/>
            <person name="Rabbinowitsch E."/>
            <person name="Steffen D."/>
            <person name="Sanders M."/>
            <person name="Ma J."/>
            <person name="Kohara Y."/>
            <person name="Sharp S."/>
            <person name="Simmonds M.N."/>
            <person name="Spiegler S."/>
            <person name="Tivey A."/>
            <person name="Sugano S."/>
            <person name="White B."/>
            <person name="Walker D."/>
            <person name="Woodward J.R."/>
            <person name="Winckler T."/>
            <person name="Tanaka Y."/>
            <person name="Shaulsky G."/>
            <person name="Schleicher M."/>
            <person name="Weinstock G.M."/>
            <person name="Rosenthal A."/>
            <person name="Cox E.C."/>
            <person name="Chisholm R.L."/>
            <person name="Gibbs R.A."/>
            <person name="Loomis W.F."/>
            <person name="Platzer M."/>
            <person name="Kay R.R."/>
            <person name="Williams J.G."/>
            <person name="Dear P.H."/>
            <person name="Noegel A.A."/>
            <person name="Barrell B.G."/>
            <person name="Kuspa A."/>
        </authorList>
    </citation>
    <scope>NUCLEOTIDE SEQUENCE [LARGE SCALE GENOMIC DNA]</scope>
    <source>
        <strain>AX4</strain>
    </source>
</reference>
<accession>Q551C2</accession>
<comment type="catalytic activity">
    <reaction>
        <text>aldehydo-D-ribose 5-phosphate = D-ribulose 5-phosphate</text>
        <dbReference type="Rhea" id="RHEA:14657"/>
        <dbReference type="ChEBI" id="CHEBI:58121"/>
        <dbReference type="ChEBI" id="CHEBI:58273"/>
        <dbReference type="EC" id="5.3.1.6"/>
    </reaction>
</comment>
<comment type="pathway">
    <text>Carbohydrate degradation; pentose phosphate pathway; D-ribose 5-phosphate from D-ribulose 5-phosphate (non-oxidative stage): step 1/1.</text>
</comment>
<comment type="similarity">
    <text evidence="1">Belongs to the ribose 5-phosphate isomerase family.</text>
</comment>